<feature type="chain" id="PRO_0000251353" description="Large ribosomal subunit protein uL18">
    <location>
        <begin position="1"/>
        <end position="120"/>
    </location>
</feature>
<name>RL18_RHIEC</name>
<reference key="1">
    <citation type="journal article" date="2006" name="Proc. Natl. Acad. Sci. U.S.A.">
        <title>The partitioned Rhizobium etli genome: genetic and metabolic redundancy in seven interacting replicons.</title>
        <authorList>
            <person name="Gonzalez V."/>
            <person name="Santamaria R.I."/>
            <person name="Bustos P."/>
            <person name="Hernandez-Gonzalez I."/>
            <person name="Medrano-Soto A."/>
            <person name="Moreno-Hagelsieb G."/>
            <person name="Janga S.C."/>
            <person name="Ramirez M.A."/>
            <person name="Jimenez-Jacinto V."/>
            <person name="Collado-Vides J."/>
            <person name="Davila G."/>
        </authorList>
    </citation>
    <scope>NUCLEOTIDE SEQUENCE [LARGE SCALE GENOMIC DNA]</scope>
    <source>
        <strain>ATCC 51251 / DSM 11541 / JCM 21823 / NBRC 15573 / CFN 42</strain>
    </source>
</reference>
<sequence length="120" mass="12744">MASRKEALARRANRVRRHIKSVANGRPRLSVHRSSKNIYAQIIDDVAGKTLASASTLDKDLRGSLKTGADTAAAAAVGKLVAERASKAGVTDVVFDRGAFIYHGRIKALAEAAREGGLTF</sequence>
<organism>
    <name type="scientific">Rhizobium etli (strain ATCC 51251 / DSM 11541 / JCM 21823 / NBRC 15573 / CFN 42)</name>
    <dbReference type="NCBI Taxonomy" id="347834"/>
    <lineage>
        <taxon>Bacteria</taxon>
        <taxon>Pseudomonadati</taxon>
        <taxon>Pseudomonadota</taxon>
        <taxon>Alphaproteobacteria</taxon>
        <taxon>Hyphomicrobiales</taxon>
        <taxon>Rhizobiaceae</taxon>
        <taxon>Rhizobium/Agrobacterium group</taxon>
        <taxon>Rhizobium</taxon>
    </lineage>
</organism>
<keyword id="KW-1185">Reference proteome</keyword>
<keyword id="KW-0687">Ribonucleoprotein</keyword>
<keyword id="KW-0689">Ribosomal protein</keyword>
<keyword id="KW-0694">RNA-binding</keyword>
<keyword id="KW-0699">rRNA-binding</keyword>
<gene>
    <name evidence="1" type="primary">rplR</name>
    <name type="ordered locus">RHE_CH01691</name>
</gene>
<evidence type="ECO:0000255" key="1">
    <source>
        <dbReference type="HAMAP-Rule" id="MF_01337"/>
    </source>
</evidence>
<evidence type="ECO:0000305" key="2"/>
<proteinExistence type="inferred from homology"/>
<protein>
    <recommendedName>
        <fullName evidence="1">Large ribosomal subunit protein uL18</fullName>
    </recommendedName>
    <alternativeName>
        <fullName evidence="2">50S ribosomal protein L18</fullName>
    </alternativeName>
</protein>
<accession>Q2K9K0</accession>
<comment type="function">
    <text evidence="1">This is one of the proteins that bind and probably mediate the attachment of the 5S RNA into the large ribosomal subunit, where it forms part of the central protuberance.</text>
</comment>
<comment type="subunit">
    <text evidence="1">Part of the 50S ribosomal subunit; part of the 5S rRNA/L5/L18/L25 subcomplex. Contacts the 5S and 23S rRNAs.</text>
</comment>
<comment type="similarity">
    <text evidence="1">Belongs to the universal ribosomal protein uL18 family.</text>
</comment>
<dbReference type="EMBL" id="CP000133">
    <property type="protein sequence ID" value="ABC90486.1"/>
    <property type="molecule type" value="Genomic_DNA"/>
</dbReference>
<dbReference type="RefSeq" id="WP_011424987.1">
    <property type="nucleotide sequence ID" value="NC_007761.1"/>
</dbReference>
<dbReference type="SMR" id="Q2K9K0"/>
<dbReference type="GeneID" id="66145872"/>
<dbReference type="KEGG" id="ret:RHE_CH01691"/>
<dbReference type="eggNOG" id="COG0256">
    <property type="taxonomic scope" value="Bacteria"/>
</dbReference>
<dbReference type="HOGENOM" id="CLU_098841_0_1_5"/>
<dbReference type="OrthoDB" id="9810939at2"/>
<dbReference type="Proteomes" id="UP000001936">
    <property type="component" value="Chromosome"/>
</dbReference>
<dbReference type="GO" id="GO:0022625">
    <property type="term" value="C:cytosolic large ribosomal subunit"/>
    <property type="evidence" value="ECO:0007669"/>
    <property type="project" value="TreeGrafter"/>
</dbReference>
<dbReference type="GO" id="GO:0008097">
    <property type="term" value="F:5S rRNA binding"/>
    <property type="evidence" value="ECO:0007669"/>
    <property type="project" value="TreeGrafter"/>
</dbReference>
<dbReference type="GO" id="GO:0003735">
    <property type="term" value="F:structural constituent of ribosome"/>
    <property type="evidence" value="ECO:0007669"/>
    <property type="project" value="InterPro"/>
</dbReference>
<dbReference type="GO" id="GO:0006412">
    <property type="term" value="P:translation"/>
    <property type="evidence" value="ECO:0007669"/>
    <property type="project" value="UniProtKB-UniRule"/>
</dbReference>
<dbReference type="CDD" id="cd00432">
    <property type="entry name" value="Ribosomal_L18_L5e"/>
    <property type="match status" value="1"/>
</dbReference>
<dbReference type="FunFam" id="3.30.420.100:FF:000001">
    <property type="entry name" value="50S ribosomal protein L18"/>
    <property type="match status" value="1"/>
</dbReference>
<dbReference type="Gene3D" id="3.30.420.100">
    <property type="match status" value="1"/>
</dbReference>
<dbReference type="HAMAP" id="MF_01337_B">
    <property type="entry name" value="Ribosomal_uL18_B"/>
    <property type="match status" value="1"/>
</dbReference>
<dbReference type="InterPro" id="IPR004389">
    <property type="entry name" value="Ribosomal_uL18_bac-type"/>
</dbReference>
<dbReference type="InterPro" id="IPR005484">
    <property type="entry name" value="Ribosomal_uL18_bac/euk"/>
</dbReference>
<dbReference type="NCBIfam" id="TIGR00060">
    <property type="entry name" value="L18_bact"/>
    <property type="match status" value="1"/>
</dbReference>
<dbReference type="PANTHER" id="PTHR12899">
    <property type="entry name" value="39S RIBOSOMAL PROTEIN L18, MITOCHONDRIAL"/>
    <property type="match status" value="1"/>
</dbReference>
<dbReference type="PANTHER" id="PTHR12899:SF3">
    <property type="entry name" value="LARGE RIBOSOMAL SUBUNIT PROTEIN UL18M"/>
    <property type="match status" value="1"/>
</dbReference>
<dbReference type="Pfam" id="PF00861">
    <property type="entry name" value="Ribosomal_L18p"/>
    <property type="match status" value="1"/>
</dbReference>
<dbReference type="SUPFAM" id="SSF53137">
    <property type="entry name" value="Translational machinery components"/>
    <property type="match status" value="1"/>
</dbReference>